<sequence length="1437" mass="161613">MDFSFSFMQGIMGNTIQQPPQLIDSANIRQEDAFDNNSDIAEDGGQTPYEATLQQGFQYPATTEDLPPLTNGYPSSISVYETQTKYQSYNQYPNGSANGFGAVRNFSPTDYYHSEIPNTRPHEILEKPSPPQPPPPPSVPQTVIPKKTGSPEIKLKITKTIQNGRELFESSLCGDLLNEVQASEHTKSKHESRKEKRKKSNKHDSSRSEERKSHKIPKLEPEEQNRPNERVDTVSEKPREEPVLKEEAPVQPILSSVPTTEVSTGVKFQVGDLVWSKVGTYPWWPCMVSSDPQLEVHTKINTRGAREYHVQFFSNQPERAWVHEKRVREYKGHKQYEELLAEATKQASNHSEKQKIRKPRPQRERAQWDIGIAHAEKALKMTREERIEQYTFIYIDKQPEEALSQAKKSVASKTEVKKTRRPRSVLNTQPEQTNAGEVASSLSSTEIRRHSQRRHTSAEEEEPPPVKIAWKTAAARKSLPASITMHKGSLDLQKCNMSPVVKIEQVFALQNATGDGKFIDQFVYSTKGIGNKTEISVRGQDRLIISTPNQRNEKPTQSVSSPEATSGSTGSVEKKQQRRSIRTRSESEKSTEVVPKKKIKKEQVETVPQATVKTGLQKGASEISDSCKPLKKRSRASTDVEMTSSAYRDTSDSDSRGLSDLQVGFGKQVDSPSATADADVSDVQSMDSSLSRRGTGMSKKDTVCQICESSGDSLIPCEGECCKHFHLECLGLASLPDSKFICMECKTGQHPCFSCKVSGKDVKRCSVGACGKFYHEACVRKFPTAIFESKGFRCPQHCCSACSMEKDIHKASKGRMMRCLRCPVAYHSGDACIAAGSMLVSSYILICSNHSKRSSNSSAVNVGFCFVCARGLIVQDHSDPMFSSYAYKSHYLLNESNRAELMKLPMIPSSSASKKKCEKGGRLLCCESCPASFHPECLSIEMPEGCWNCNDCKAGKKLHYKQIVWVKLGNYRWWPAEICNPRSVPLNIQGLKHDLGDFPVFFFGSHDYYWVHQGRVFPYVEGDKSFAEGQTSINKTFKKALEEAAKRFQELKAQRESKEALEIEKNSRKPPPYKHIKANKVIGKVQIQVADLSEIPRCNCKPADENPCGLESECLNRMLQYECHPQVCPAGDRCQNQCFTKRLYPDAEIIKTERRGWGLRTKRSIKKGEFVNEYVGELIDEEECRLRIKRAHENSVTNFYMLTVTKDRIIDAGPKGNYSRFMNHSCNPNCETQKWTVNGDVRVGLFALCDIPAGMELTFNYNLDCLGNGRTECHCGADNCSGFLGVRPKSACASTNEEKAKNAKLKQKRRKIKTEPKQMHEDYCFQCGDGGELVMCDKKDCPKAYHLLCLNLTQPPYGKWECPWHQCDECSSAAVSFCEFCPHSFCKDHEKGALVPSALEGRLCCSEHDPMAPVSPEYWSKIKCKWESQDHGEEVKE</sequence>
<accession>Q9BZ95</accession>
<accession>B7ZL11</accession>
<accession>D3DSX1</accession>
<accession>Q1RMD3</accession>
<accession>Q3B796</accession>
<accession>Q6ZSA5</accession>
<accession>Q9BYU8</accession>
<accession>Q9BYU9</accession>
<accession>Q9H2M8</accession>
<accession>Q9H9W9</accession>
<accession>Q9NXA6</accession>
<protein>
    <recommendedName>
        <fullName>Histone-lysine N-methyltransferase NSD3</fullName>
        <ecNumber evidence="12">2.1.1.370</ecNumber>
        <ecNumber evidence="12">2.1.1.371</ecNumber>
    </recommendedName>
    <alternativeName>
        <fullName>Nuclear SET domain-containing protein 3</fullName>
    </alternativeName>
    <alternativeName>
        <fullName>Protein whistle</fullName>
    </alternativeName>
    <alternativeName>
        <fullName>WHSC1-like 1 isoform 9 with methyltransferase activity to lysine</fullName>
    </alternativeName>
    <alternativeName>
        <fullName>Wolf-Hirschhorn syndrome candidate 1-like protein 1</fullName>
        <shortName>WHSC1-like protein 1</shortName>
    </alternativeName>
</protein>
<dbReference type="EC" id="2.1.1.370" evidence="12"/>
<dbReference type="EC" id="2.1.1.371" evidence="12"/>
<dbReference type="EMBL" id="AF332468">
    <property type="protein sequence ID" value="AAK00354.1"/>
    <property type="molecule type" value="mRNA"/>
</dbReference>
<dbReference type="EMBL" id="AF332469">
    <property type="protein sequence ID" value="AAK00355.1"/>
    <property type="molecule type" value="mRNA"/>
</dbReference>
<dbReference type="EMBL" id="AJ295990">
    <property type="protein sequence ID" value="CAC28350.1"/>
    <property type="molecule type" value="mRNA"/>
</dbReference>
<dbReference type="EMBL" id="AJ295991">
    <property type="protein sequence ID" value="CAC28351.1"/>
    <property type="molecule type" value="mRNA"/>
</dbReference>
<dbReference type="EMBL" id="AJ295992">
    <property type="protein sequence ID" value="CAC28352.1"/>
    <property type="molecule type" value="mRNA"/>
</dbReference>
<dbReference type="EMBL" id="AF255649">
    <property type="protein sequence ID" value="AAG44637.1"/>
    <property type="status" value="ALT_FRAME"/>
    <property type="molecule type" value="mRNA"/>
</dbReference>
<dbReference type="EMBL" id="AK000360">
    <property type="protein sequence ID" value="BAA91110.1"/>
    <property type="status" value="ALT_INIT"/>
    <property type="molecule type" value="mRNA"/>
</dbReference>
<dbReference type="EMBL" id="AK022560">
    <property type="protein sequence ID" value="BAB14099.1"/>
    <property type="molecule type" value="mRNA"/>
</dbReference>
<dbReference type="EMBL" id="AK127594">
    <property type="status" value="NOT_ANNOTATED_CDS"/>
    <property type="molecule type" value="mRNA"/>
</dbReference>
<dbReference type="EMBL" id="CH471080">
    <property type="protein sequence ID" value="EAW63320.1"/>
    <property type="molecule type" value="Genomic_DNA"/>
</dbReference>
<dbReference type="EMBL" id="CH471080">
    <property type="protein sequence ID" value="EAW63321.1"/>
    <property type="molecule type" value="Genomic_DNA"/>
</dbReference>
<dbReference type="EMBL" id="BC012059">
    <property type="protein sequence ID" value="AAH12059.1"/>
    <property type="molecule type" value="mRNA"/>
</dbReference>
<dbReference type="EMBL" id="BC062631">
    <property type="protein sequence ID" value="AAH62631.1"/>
    <property type="molecule type" value="mRNA"/>
</dbReference>
<dbReference type="EMBL" id="BC101717">
    <property type="protein sequence ID" value="AAI01718.1"/>
    <property type="molecule type" value="mRNA"/>
</dbReference>
<dbReference type="EMBL" id="BC107734">
    <property type="protein sequence ID" value="AAI07735.1"/>
    <property type="status" value="ALT_SEQ"/>
    <property type="molecule type" value="mRNA"/>
</dbReference>
<dbReference type="EMBL" id="BC113469">
    <property type="protein sequence ID" value="AAI13470.1"/>
    <property type="molecule type" value="mRNA"/>
</dbReference>
<dbReference type="EMBL" id="BC115006">
    <property type="protein sequence ID" value="AAI15007.1"/>
    <property type="molecule type" value="mRNA"/>
</dbReference>
<dbReference type="EMBL" id="BC143510">
    <property type="protein sequence ID" value="AAI43511.1"/>
    <property type="molecule type" value="mRNA"/>
</dbReference>
<dbReference type="EMBL" id="AC087362">
    <property type="status" value="NOT_ANNOTATED_CDS"/>
    <property type="molecule type" value="Genomic_DNA"/>
</dbReference>
<dbReference type="EMBL" id="AC087623">
    <property type="status" value="NOT_ANNOTATED_CDS"/>
    <property type="molecule type" value="Genomic_DNA"/>
</dbReference>
<dbReference type="CCDS" id="CCDS43729.1">
    <molecule id="Q9BZ95-1"/>
</dbReference>
<dbReference type="CCDS" id="CCDS6105.1">
    <molecule id="Q9BZ95-3"/>
</dbReference>
<dbReference type="RefSeq" id="NP_060248.2">
    <molecule id="Q9BZ95-3"/>
    <property type="nucleotide sequence ID" value="NM_017778.2"/>
</dbReference>
<dbReference type="RefSeq" id="NP_075447.1">
    <molecule id="Q9BZ95-1"/>
    <property type="nucleotide sequence ID" value="NM_023034.2"/>
</dbReference>
<dbReference type="PDB" id="2DAQ">
    <property type="method" value="NMR"/>
    <property type="chains" value="A=957-1053"/>
</dbReference>
<dbReference type="PDB" id="2NCZ">
    <property type="method" value="NMR"/>
    <property type="chains" value="B=152-163"/>
</dbReference>
<dbReference type="PDB" id="2ND1">
    <property type="method" value="NMR"/>
    <property type="chains" value="B=593-605"/>
</dbReference>
<dbReference type="PDB" id="4GND">
    <property type="method" value="X-ray"/>
    <property type="resolution" value="2.27 A"/>
    <property type="chains" value="A/C=1310-1413"/>
</dbReference>
<dbReference type="PDB" id="4GNE">
    <property type="method" value="X-ray"/>
    <property type="resolution" value="1.47 A"/>
    <property type="chains" value="A=1310-1413"/>
</dbReference>
<dbReference type="PDB" id="4GNF">
    <property type="method" value="X-ray"/>
    <property type="resolution" value="1.55 A"/>
    <property type="chains" value="A=1310-1413"/>
</dbReference>
<dbReference type="PDB" id="4GNG">
    <property type="method" value="X-ray"/>
    <property type="resolution" value="1.73 A"/>
    <property type="chains" value="A/D=1310-1413"/>
</dbReference>
<dbReference type="PDB" id="4RXJ">
    <property type="method" value="X-ray"/>
    <property type="resolution" value="2.10 A"/>
    <property type="chains" value="A=953-1064"/>
</dbReference>
<dbReference type="PDB" id="5UPD">
    <property type="method" value="X-ray"/>
    <property type="resolution" value="1.80 A"/>
    <property type="chains" value="A=1054-1285"/>
</dbReference>
<dbReference type="PDB" id="6CEN">
    <property type="method" value="X-ray"/>
    <property type="resolution" value="1.61 A"/>
    <property type="chains" value="A=1058-1285"/>
</dbReference>
<dbReference type="PDB" id="6G24">
    <property type="method" value="X-ray"/>
    <property type="resolution" value="2.10 A"/>
    <property type="chains" value="A=263-398"/>
</dbReference>
<dbReference type="PDB" id="6G25">
    <property type="method" value="X-ray"/>
    <property type="resolution" value="1.43 A"/>
    <property type="chains" value="A=263-398"/>
</dbReference>
<dbReference type="PDB" id="6G27">
    <property type="method" value="X-ray"/>
    <property type="resolution" value="1.65 A"/>
    <property type="chains" value="A=263-398"/>
</dbReference>
<dbReference type="PDB" id="6G29">
    <property type="method" value="X-ray"/>
    <property type="resolution" value="1.70 A"/>
    <property type="chains" value="A=263-398"/>
</dbReference>
<dbReference type="PDB" id="6G2B">
    <property type="method" value="X-ray"/>
    <property type="resolution" value="1.61 A"/>
    <property type="chains" value="A=263-398"/>
</dbReference>
<dbReference type="PDB" id="6G2C">
    <property type="method" value="X-ray"/>
    <property type="resolution" value="1.76 A"/>
    <property type="chains" value="A=263-398"/>
</dbReference>
<dbReference type="PDB" id="6G2E">
    <property type="method" value="X-ray"/>
    <property type="resolution" value="1.85 A"/>
    <property type="chains" value="A=263-398"/>
</dbReference>
<dbReference type="PDB" id="6G2F">
    <property type="method" value="X-ray"/>
    <property type="resolution" value="1.74 A"/>
    <property type="chains" value="A=263-398"/>
</dbReference>
<dbReference type="PDB" id="6G2O">
    <property type="method" value="X-ray"/>
    <property type="resolution" value="1.81 A"/>
    <property type="chains" value="A=263-398"/>
</dbReference>
<dbReference type="PDB" id="6G3P">
    <property type="method" value="X-ray"/>
    <property type="resolution" value="2.80 A"/>
    <property type="chains" value="A/B/C/D=247-398"/>
</dbReference>
<dbReference type="PDB" id="6G3T">
    <property type="method" value="X-ray"/>
    <property type="resolution" value="2.53 A"/>
    <property type="chains" value="A/B/C/D=247-398"/>
</dbReference>
<dbReference type="PDB" id="7CRP">
    <property type="method" value="EM"/>
    <property type="resolution" value="3.20 A"/>
    <property type="chains" value="I=680-1437"/>
</dbReference>
<dbReference type="PDB" id="7CRQ">
    <property type="method" value="EM"/>
    <property type="resolution" value="3.15 A"/>
    <property type="chains" value="I/L=680-1437"/>
</dbReference>
<dbReference type="PDB" id="7CRR">
    <property type="method" value="EM"/>
    <property type="resolution" value="3.48 A"/>
    <property type="chains" value="I=680-1437"/>
</dbReference>
<dbReference type="PDB" id="7JYN">
    <property type="method" value="NMR"/>
    <property type="chains" value="B=148-184"/>
</dbReference>
<dbReference type="PDBsum" id="2DAQ"/>
<dbReference type="PDBsum" id="2NCZ"/>
<dbReference type="PDBsum" id="2ND1"/>
<dbReference type="PDBsum" id="4GND"/>
<dbReference type="PDBsum" id="4GNE"/>
<dbReference type="PDBsum" id="4GNF"/>
<dbReference type="PDBsum" id="4GNG"/>
<dbReference type="PDBsum" id="4RXJ"/>
<dbReference type="PDBsum" id="5UPD"/>
<dbReference type="PDBsum" id="6CEN"/>
<dbReference type="PDBsum" id="6G24"/>
<dbReference type="PDBsum" id="6G25"/>
<dbReference type="PDBsum" id="6G27"/>
<dbReference type="PDBsum" id="6G29"/>
<dbReference type="PDBsum" id="6G2B"/>
<dbReference type="PDBsum" id="6G2C"/>
<dbReference type="PDBsum" id="6G2E"/>
<dbReference type="PDBsum" id="6G2F"/>
<dbReference type="PDBsum" id="6G2O"/>
<dbReference type="PDBsum" id="6G3P"/>
<dbReference type="PDBsum" id="6G3T"/>
<dbReference type="PDBsum" id="7CRP"/>
<dbReference type="PDBsum" id="7CRQ"/>
<dbReference type="PDBsum" id="7CRR"/>
<dbReference type="PDBsum" id="7JYN"/>
<dbReference type="EMDB" id="EMD-30455"/>
<dbReference type="EMDB" id="EMD-30456"/>
<dbReference type="EMDB" id="EMD-30457"/>
<dbReference type="SASBDB" id="Q9BZ95"/>
<dbReference type="SMR" id="Q9BZ95"/>
<dbReference type="BioGRID" id="120250">
    <property type="interactions" value="116"/>
</dbReference>
<dbReference type="DIP" id="DIP-62074N"/>
<dbReference type="FunCoup" id="Q9BZ95">
    <property type="interactions" value="4371"/>
</dbReference>
<dbReference type="IntAct" id="Q9BZ95">
    <property type="interactions" value="65"/>
</dbReference>
<dbReference type="MINT" id="Q9BZ95"/>
<dbReference type="STRING" id="9606.ENSP00000313983"/>
<dbReference type="BindingDB" id="Q9BZ95"/>
<dbReference type="ChEMBL" id="CHEMBL3108646"/>
<dbReference type="GlyGen" id="Q9BZ95">
    <property type="glycosylation" value="4 sites, 3 N-linked glycans (3 sites), 1 O-linked glycan (1 site)"/>
</dbReference>
<dbReference type="iPTMnet" id="Q9BZ95"/>
<dbReference type="PhosphoSitePlus" id="Q9BZ95"/>
<dbReference type="SwissPalm" id="Q9BZ95"/>
<dbReference type="BioMuta" id="NSD3"/>
<dbReference type="DMDM" id="74761342"/>
<dbReference type="jPOST" id="Q9BZ95"/>
<dbReference type="MassIVE" id="Q9BZ95"/>
<dbReference type="PaxDb" id="9606-ENSP00000313983"/>
<dbReference type="PeptideAtlas" id="Q9BZ95"/>
<dbReference type="ProteomicsDB" id="7208"/>
<dbReference type="ProteomicsDB" id="79779">
    <molecule id="Q9BZ95-1"/>
</dbReference>
<dbReference type="ProteomicsDB" id="79780">
    <molecule id="Q9BZ95-2"/>
</dbReference>
<dbReference type="ProteomicsDB" id="79781">
    <molecule id="Q9BZ95-3"/>
</dbReference>
<dbReference type="ProteomicsDB" id="79782">
    <molecule id="Q9BZ95-4"/>
</dbReference>
<dbReference type="Pumba" id="Q9BZ95"/>
<dbReference type="ABCD" id="Q9BZ95">
    <property type="antibodies" value="2 sequenced antibodies"/>
</dbReference>
<dbReference type="Antibodypedia" id="984">
    <property type="antibodies" value="379 antibodies from 36 providers"/>
</dbReference>
<dbReference type="DNASU" id="54904"/>
<dbReference type="Ensembl" id="ENST00000316985.7">
    <molecule id="Q9BZ95-3"/>
    <property type="protein sequence ID" value="ENSP00000313410.3"/>
    <property type="gene ID" value="ENSG00000147548.17"/>
</dbReference>
<dbReference type="Ensembl" id="ENST00000317025.13">
    <molecule id="Q9BZ95-1"/>
    <property type="protein sequence ID" value="ENSP00000313983.7"/>
    <property type="gene ID" value="ENSG00000147548.17"/>
</dbReference>
<dbReference type="Ensembl" id="ENST00000433384.6">
    <molecule id="Q9BZ95-2"/>
    <property type="protein sequence ID" value="ENSP00000393284.2"/>
    <property type="gene ID" value="ENSG00000147548.17"/>
</dbReference>
<dbReference type="Ensembl" id="ENST00000527502.5">
    <molecule id="Q9BZ95-5"/>
    <property type="protein sequence ID" value="ENSP00000434730.1"/>
    <property type="gene ID" value="ENSG00000147548.17"/>
</dbReference>
<dbReference type="GeneID" id="54904"/>
<dbReference type="KEGG" id="hsa:54904"/>
<dbReference type="MANE-Select" id="ENST00000317025.13">
    <property type="protein sequence ID" value="ENSP00000313983.7"/>
    <property type="RefSeq nucleotide sequence ID" value="NM_023034.2"/>
    <property type="RefSeq protein sequence ID" value="NP_075447.1"/>
</dbReference>
<dbReference type="UCSC" id="uc003xli.4">
    <molecule id="Q9BZ95-1"/>
    <property type="organism name" value="human"/>
</dbReference>
<dbReference type="AGR" id="HGNC:12767"/>
<dbReference type="CTD" id="54904"/>
<dbReference type="DisGeNET" id="54904"/>
<dbReference type="GeneCards" id="NSD3"/>
<dbReference type="HGNC" id="HGNC:12767">
    <property type="gene designation" value="NSD3"/>
</dbReference>
<dbReference type="HPA" id="ENSG00000147548">
    <property type="expression patterns" value="Low tissue specificity"/>
</dbReference>
<dbReference type="MalaCards" id="NSD3"/>
<dbReference type="MIM" id="607083">
    <property type="type" value="gene"/>
</dbReference>
<dbReference type="neXtProt" id="NX_Q9BZ95"/>
<dbReference type="OpenTargets" id="ENSG00000147548"/>
<dbReference type="PharmGKB" id="PA37370"/>
<dbReference type="VEuPathDB" id="HostDB:ENSG00000147548"/>
<dbReference type="eggNOG" id="KOG1081">
    <property type="taxonomic scope" value="Eukaryota"/>
</dbReference>
<dbReference type="GeneTree" id="ENSGT00940000155355"/>
<dbReference type="HOGENOM" id="CLU_004494_2_1_1"/>
<dbReference type="InParanoid" id="Q9BZ95"/>
<dbReference type="OMA" id="DAGWPTY"/>
<dbReference type="OrthoDB" id="422362at2759"/>
<dbReference type="PAN-GO" id="Q9BZ95">
    <property type="GO annotations" value="4 GO annotations based on evolutionary models"/>
</dbReference>
<dbReference type="PhylomeDB" id="Q9BZ95"/>
<dbReference type="TreeFam" id="TF329088"/>
<dbReference type="BioCyc" id="MetaCyc:HS07446-MONOMER"/>
<dbReference type="BRENDA" id="2.1.1.356">
    <property type="organism ID" value="2681"/>
</dbReference>
<dbReference type="BRENDA" id="2.1.1.370">
    <property type="organism ID" value="2681"/>
</dbReference>
<dbReference type="BRENDA" id="2.1.1.371">
    <property type="organism ID" value="2681"/>
</dbReference>
<dbReference type="BRENDA" id="2.1.1.372">
    <property type="organism ID" value="2681"/>
</dbReference>
<dbReference type="PathwayCommons" id="Q9BZ95"/>
<dbReference type="Reactome" id="R-HSA-3214841">
    <property type="pathway name" value="PKMTs methylate histone lysines"/>
</dbReference>
<dbReference type="SignaLink" id="Q9BZ95"/>
<dbReference type="SIGNOR" id="Q9BZ95"/>
<dbReference type="BioGRID-ORCS" id="54904">
    <property type="hits" value="19 hits in 1176 CRISPR screens"/>
</dbReference>
<dbReference type="ChiTaRS" id="WHSC1L1">
    <property type="organism name" value="human"/>
</dbReference>
<dbReference type="EvolutionaryTrace" id="Q9BZ95"/>
<dbReference type="GeneWiki" id="WHSC1L1"/>
<dbReference type="GenomeRNAi" id="54904"/>
<dbReference type="Pharos" id="Q9BZ95">
    <property type="development level" value="Tchem"/>
</dbReference>
<dbReference type="PRO" id="PR:Q9BZ95"/>
<dbReference type="Proteomes" id="UP000005640">
    <property type="component" value="Chromosome 8"/>
</dbReference>
<dbReference type="RNAct" id="Q9BZ95">
    <property type="molecule type" value="protein"/>
</dbReference>
<dbReference type="Bgee" id="ENSG00000147548">
    <property type="expression patterns" value="Expressed in pylorus and 188 other cell types or tissues"/>
</dbReference>
<dbReference type="ExpressionAtlas" id="Q9BZ95">
    <property type="expression patterns" value="baseline and differential"/>
</dbReference>
<dbReference type="GO" id="GO:0000785">
    <property type="term" value="C:chromatin"/>
    <property type="evidence" value="ECO:0000318"/>
    <property type="project" value="GO_Central"/>
</dbReference>
<dbReference type="GO" id="GO:0005654">
    <property type="term" value="C:nucleoplasm"/>
    <property type="evidence" value="ECO:0000304"/>
    <property type="project" value="Reactome"/>
</dbReference>
<dbReference type="GO" id="GO:0005634">
    <property type="term" value="C:nucleus"/>
    <property type="evidence" value="ECO:0000315"/>
    <property type="project" value="UniProtKB"/>
</dbReference>
<dbReference type="GO" id="GO:0140938">
    <property type="term" value="F:histone H3 methyltransferase activity"/>
    <property type="evidence" value="ECO:0000304"/>
    <property type="project" value="Reactome"/>
</dbReference>
<dbReference type="GO" id="GO:0140952">
    <property type="term" value="F:histone H3K27 dimethyltransferase activity"/>
    <property type="evidence" value="ECO:0000314"/>
    <property type="project" value="UniProtKB"/>
</dbReference>
<dbReference type="GO" id="GO:0140951">
    <property type="term" value="F:histone H3K27 trimethyltransferase activity"/>
    <property type="evidence" value="ECO:0000314"/>
    <property type="project" value="UniProtKB"/>
</dbReference>
<dbReference type="GO" id="GO:0046975">
    <property type="term" value="F:histone H3K36 methyltransferase activity"/>
    <property type="evidence" value="ECO:0000315"/>
    <property type="project" value="UniProtKB"/>
</dbReference>
<dbReference type="GO" id="GO:0140946">
    <property type="term" value="F:histone H3K4 dimethyltransferase activity"/>
    <property type="evidence" value="ECO:0000314"/>
    <property type="project" value="UniProtKB"/>
</dbReference>
<dbReference type="GO" id="GO:0140537">
    <property type="term" value="F:transcription regulator activator activity"/>
    <property type="evidence" value="ECO:0000315"/>
    <property type="project" value="UniProtKB"/>
</dbReference>
<dbReference type="GO" id="GO:0008270">
    <property type="term" value="F:zinc ion binding"/>
    <property type="evidence" value="ECO:0007669"/>
    <property type="project" value="UniProtKB-KW"/>
</dbReference>
<dbReference type="GO" id="GO:0032259">
    <property type="term" value="P:methylation"/>
    <property type="evidence" value="ECO:0007669"/>
    <property type="project" value="UniProtKB-KW"/>
</dbReference>
<dbReference type="GO" id="GO:0045893">
    <property type="term" value="P:positive regulation of DNA-templated transcription"/>
    <property type="evidence" value="ECO:0000315"/>
    <property type="project" value="UniProtKB"/>
</dbReference>
<dbReference type="GO" id="GO:0006355">
    <property type="term" value="P:regulation of DNA-templated transcription"/>
    <property type="evidence" value="ECO:0000318"/>
    <property type="project" value="GO_Central"/>
</dbReference>
<dbReference type="CDD" id="cd15649">
    <property type="entry name" value="PHD1_NSD3"/>
    <property type="match status" value="1"/>
</dbReference>
<dbReference type="CDD" id="cd15652">
    <property type="entry name" value="PHD2_NSD3"/>
    <property type="match status" value="1"/>
</dbReference>
<dbReference type="CDD" id="cd15655">
    <property type="entry name" value="PHD3_NSD3"/>
    <property type="match status" value="1"/>
</dbReference>
<dbReference type="CDD" id="cd15658">
    <property type="entry name" value="PHD4_NSD3"/>
    <property type="match status" value="1"/>
</dbReference>
<dbReference type="CDD" id="cd15661">
    <property type="entry name" value="PHD5_NSD3"/>
    <property type="match status" value="1"/>
</dbReference>
<dbReference type="CDD" id="cd20163">
    <property type="entry name" value="PWWP_NSD3_rpt1"/>
    <property type="match status" value="1"/>
</dbReference>
<dbReference type="CDD" id="cd20166">
    <property type="entry name" value="PWWP_NSD3_rpt2"/>
    <property type="match status" value="1"/>
</dbReference>
<dbReference type="CDD" id="cd19212">
    <property type="entry name" value="SET_NSD3"/>
    <property type="match status" value="1"/>
</dbReference>
<dbReference type="FunFam" id="2.170.270.10:FF:000002">
    <property type="entry name" value="Histone-lysine N-methyltransferase"/>
    <property type="match status" value="1"/>
</dbReference>
<dbReference type="FunFam" id="2.30.30.140:FF:000004">
    <property type="entry name" value="Histone-lysine N-methyltransferase"/>
    <property type="match status" value="1"/>
</dbReference>
<dbReference type="FunFam" id="2.30.30.140:FF:000030">
    <property type="entry name" value="Histone-lysine N-methyltransferase"/>
    <property type="match status" value="1"/>
</dbReference>
<dbReference type="FunFam" id="3.30.40.10:FF:000025">
    <property type="entry name" value="Histone-lysine N-methyltransferase"/>
    <property type="match status" value="1"/>
</dbReference>
<dbReference type="FunFam" id="3.30.40.10:FF:000106">
    <property type="entry name" value="Histone-lysine N-methyltransferase"/>
    <property type="match status" value="1"/>
</dbReference>
<dbReference type="FunFam" id="3.30.40.10:FF:000205">
    <property type="entry name" value="Histone-lysine N-methyltransferase"/>
    <property type="match status" value="1"/>
</dbReference>
<dbReference type="FunFam" id="3.30.40.10:FF:000397">
    <property type="entry name" value="Histone-lysine N-methyltransferase"/>
    <property type="match status" value="1"/>
</dbReference>
<dbReference type="Gene3D" id="2.30.30.140">
    <property type="match status" value="2"/>
</dbReference>
<dbReference type="Gene3D" id="2.170.270.10">
    <property type="entry name" value="SET domain"/>
    <property type="match status" value="1"/>
</dbReference>
<dbReference type="Gene3D" id="3.30.40.10">
    <property type="entry name" value="Zinc/RING finger domain, C3HC4 (zinc finger)"/>
    <property type="match status" value="4"/>
</dbReference>
<dbReference type="IDEAL" id="IID00496"/>
<dbReference type="InterPro" id="IPR006560">
    <property type="entry name" value="AWS_dom"/>
</dbReference>
<dbReference type="InterPro" id="IPR041306">
    <property type="entry name" value="C5HCH"/>
</dbReference>
<dbReference type="InterPro" id="IPR055198">
    <property type="entry name" value="NSD_PHD"/>
</dbReference>
<dbReference type="InterPro" id="IPR047456">
    <property type="entry name" value="PHD2_NSD3"/>
</dbReference>
<dbReference type="InterPro" id="IPR047458">
    <property type="entry name" value="PHD4_NSD3"/>
</dbReference>
<dbReference type="InterPro" id="IPR047527">
    <property type="entry name" value="PHD5_NSD3"/>
</dbReference>
<dbReference type="InterPro" id="IPR055197">
    <property type="entry name" value="PHDvar_NSD"/>
</dbReference>
<dbReference type="InterPro" id="IPR003616">
    <property type="entry name" value="Post-SET_dom"/>
</dbReference>
<dbReference type="InterPro" id="IPR000313">
    <property type="entry name" value="PWWP_dom"/>
</dbReference>
<dbReference type="InterPro" id="IPR047451">
    <property type="entry name" value="PWWP_NSD3_rpt1"/>
</dbReference>
<dbReference type="InterPro" id="IPR047453">
    <property type="entry name" value="PWWP_NSD3_rpt2"/>
</dbReference>
<dbReference type="InterPro" id="IPR050777">
    <property type="entry name" value="SET2_Histone-Lys_MeTrsfase"/>
</dbReference>
<dbReference type="InterPro" id="IPR001214">
    <property type="entry name" value="SET_dom"/>
</dbReference>
<dbReference type="InterPro" id="IPR046341">
    <property type="entry name" value="SET_dom_sf"/>
</dbReference>
<dbReference type="InterPro" id="IPR047461">
    <property type="entry name" value="SET_NSD3"/>
</dbReference>
<dbReference type="InterPro" id="IPR019786">
    <property type="entry name" value="Zinc_finger_PHD-type_CS"/>
</dbReference>
<dbReference type="InterPro" id="IPR011011">
    <property type="entry name" value="Znf_FYVE_PHD"/>
</dbReference>
<dbReference type="InterPro" id="IPR001965">
    <property type="entry name" value="Znf_PHD"/>
</dbReference>
<dbReference type="InterPro" id="IPR019787">
    <property type="entry name" value="Znf_PHD-finger"/>
</dbReference>
<dbReference type="InterPro" id="IPR013083">
    <property type="entry name" value="Znf_RING/FYVE/PHD"/>
</dbReference>
<dbReference type="PANTHER" id="PTHR22884">
    <property type="entry name" value="SET DOMAIN PROTEINS"/>
    <property type="match status" value="1"/>
</dbReference>
<dbReference type="Pfam" id="PF17907">
    <property type="entry name" value="AWS"/>
    <property type="match status" value="1"/>
</dbReference>
<dbReference type="Pfam" id="PF17982">
    <property type="entry name" value="C5HCH"/>
    <property type="match status" value="1"/>
</dbReference>
<dbReference type="Pfam" id="PF23011">
    <property type="entry name" value="PHD-1st_NSD"/>
    <property type="match status" value="1"/>
</dbReference>
<dbReference type="Pfam" id="PF22908">
    <property type="entry name" value="PHD_NSD"/>
    <property type="match status" value="1"/>
</dbReference>
<dbReference type="Pfam" id="PF23004">
    <property type="entry name" value="PHDvar_NSD"/>
    <property type="match status" value="1"/>
</dbReference>
<dbReference type="Pfam" id="PF00855">
    <property type="entry name" value="PWWP"/>
    <property type="match status" value="2"/>
</dbReference>
<dbReference type="Pfam" id="PF00856">
    <property type="entry name" value="SET"/>
    <property type="match status" value="1"/>
</dbReference>
<dbReference type="SMART" id="SM00570">
    <property type="entry name" value="AWS"/>
    <property type="match status" value="1"/>
</dbReference>
<dbReference type="SMART" id="SM00249">
    <property type="entry name" value="PHD"/>
    <property type="match status" value="5"/>
</dbReference>
<dbReference type="SMART" id="SM00508">
    <property type="entry name" value="PostSET"/>
    <property type="match status" value="1"/>
</dbReference>
<dbReference type="SMART" id="SM00293">
    <property type="entry name" value="PWWP"/>
    <property type="match status" value="2"/>
</dbReference>
<dbReference type="SMART" id="SM00317">
    <property type="entry name" value="SET"/>
    <property type="match status" value="1"/>
</dbReference>
<dbReference type="SUPFAM" id="SSF57903">
    <property type="entry name" value="FYVE/PHD zinc finger"/>
    <property type="match status" value="3"/>
</dbReference>
<dbReference type="SUPFAM" id="SSF82199">
    <property type="entry name" value="SET domain"/>
    <property type="match status" value="1"/>
</dbReference>
<dbReference type="SUPFAM" id="SSF63748">
    <property type="entry name" value="Tudor/PWWP/MBT"/>
    <property type="match status" value="2"/>
</dbReference>
<dbReference type="PROSITE" id="PS51215">
    <property type="entry name" value="AWS"/>
    <property type="match status" value="1"/>
</dbReference>
<dbReference type="PROSITE" id="PS50868">
    <property type="entry name" value="POST_SET"/>
    <property type="match status" value="1"/>
</dbReference>
<dbReference type="PROSITE" id="PS50812">
    <property type="entry name" value="PWWP"/>
    <property type="match status" value="2"/>
</dbReference>
<dbReference type="PROSITE" id="PS50280">
    <property type="entry name" value="SET"/>
    <property type="match status" value="1"/>
</dbReference>
<dbReference type="PROSITE" id="PS01359">
    <property type="entry name" value="ZF_PHD_1"/>
    <property type="match status" value="1"/>
</dbReference>
<dbReference type="PROSITE" id="PS50016">
    <property type="entry name" value="ZF_PHD_2"/>
    <property type="match status" value="2"/>
</dbReference>
<keyword id="KW-0002">3D-structure</keyword>
<keyword id="KW-0007">Acetylation</keyword>
<keyword id="KW-0025">Alternative splicing</keyword>
<keyword id="KW-0156">Chromatin regulator</keyword>
<keyword id="KW-0160">Chromosomal rearrangement</keyword>
<keyword id="KW-0158">Chromosome</keyword>
<keyword id="KW-0175">Coiled coil</keyword>
<keyword id="KW-1017">Isopeptide bond</keyword>
<keyword id="KW-0479">Metal-binding</keyword>
<keyword id="KW-0489">Methyltransferase</keyword>
<keyword id="KW-0539">Nucleus</keyword>
<keyword id="KW-0597">Phosphoprotein</keyword>
<keyword id="KW-1267">Proteomics identification</keyword>
<keyword id="KW-0656">Proto-oncogene</keyword>
<keyword id="KW-1185">Reference proteome</keyword>
<keyword id="KW-0677">Repeat</keyword>
<keyword id="KW-0949">S-adenosyl-L-methionine</keyword>
<keyword id="KW-0804">Transcription</keyword>
<keyword id="KW-0805">Transcription regulation</keyword>
<keyword id="KW-0808">Transferase</keyword>
<keyword id="KW-0832">Ubl conjugation</keyword>
<keyword id="KW-0862">Zinc</keyword>
<keyword id="KW-0863">Zinc-finger</keyword>
<name>NSD3_HUMAN</name>
<comment type="function">
    <text evidence="12">Histone methyltransferase. Preferentially dimethylates 'Lys-4' and 'Lys-27' of histone H3 forming H3K4me2 and H3K27me2. H3 'Lys-4' methylation represents a specific tag for epigenetic transcriptional activation, while 'Lys-27' is a mark for transcriptional repression.</text>
</comment>
<comment type="catalytic activity">
    <reaction evidence="12">
        <text>L-lysyl(4)-[histone H3] + 2 S-adenosyl-L-methionine = N(6),N(6)-dimethyl-L-lysyl(4)-[histone H3] + 2 S-adenosyl-L-homocysteine + 2 H(+)</text>
        <dbReference type="Rhea" id="RHEA:64448"/>
        <dbReference type="Rhea" id="RHEA-COMP:15540"/>
        <dbReference type="Rhea" id="RHEA-COMP:15547"/>
        <dbReference type="ChEBI" id="CHEBI:15378"/>
        <dbReference type="ChEBI" id="CHEBI:29969"/>
        <dbReference type="ChEBI" id="CHEBI:57856"/>
        <dbReference type="ChEBI" id="CHEBI:59789"/>
        <dbReference type="ChEBI" id="CHEBI:61976"/>
        <dbReference type="EC" id="2.1.1.370"/>
    </reaction>
</comment>
<comment type="catalytic activity">
    <reaction evidence="12">
        <text>L-lysyl(27)-[histone H3] + 2 S-adenosyl-L-methionine = N(6),N(6)-dimethyl-L-lysyl(27)-[histone H3] + 2 S-adenosyl-L-homocysteine + 2 H(+)</text>
        <dbReference type="Rhea" id="RHEA:64452"/>
        <dbReference type="Rhea" id="RHEA-COMP:15539"/>
        <dbReference type="Rhea" id="RHEA-COMP:15548"/>
        <dbReference type="ChEBI" id="CHEBI:15378"/>
        <dbReference type="ChEBI" id="CHEBI:29969"/>
        <dbReference type="ChEBI" id="CHEBI:57856"/>
        <dbReference type="ChEBI" id="CHEBI:59789"/>
        <dbReference type="ChEBI" id="CHEBI:61976"/>
        <dbReference type="EC" id="2.1.1.371"/>
    </reaction>
</comment>
<comment type="subunit">
    <text evidence="13 14 15 16">Interacts with BRD4 (PubMed:21555454, PubMed:29176719). Interacts (via KIKL motif) with BRD3 (via NET domain) (PubMed:29567837, PubMed:33592170).</text>
</comment>
<comment type="interaction">
    <interactant intactId="EBI-3390132">
        <id>Q9BZ95</id>
    </interactant>
    <interactant intactId="EBI-495465">
        <id>Q13315</id>
        <label>ATM</label>
    </interactant>
    <organismsDiffer>false</organismsDiffer>
    <experiments>3</experiments>
</comment>
<comment type="interaction">
    <interactant intactId="EBI-3390132">
        <id>Q9BZ95</id>
    </interactant>
    <interactant intactId="EBI-78219">
        <id>P45973</id>
        <label>CBX5</label>
    </interactant>
    <organismsDiffer>false</organismsDiffer>
    <experiments>2</experiments>
</comment>
<comment type="interaction">
    <interactant intactId="EBI-3390132">
        <id>Q9BZ95</id>
    </interactant>
    <interactant intactId="EBI-77321">
        <id>Q9UER7</id>
        <label>DAXX</label>
    </interactant>
    <organismsDiffer>false</organismsDiffer>
    <experiments>2</experiments>
</comment>
<comment type="interaction">
    <interactant intactId="EBI-3390132">
        <id>Q9BZ95</id>
    </interactant>
    <interactant intactId="EBI-78473">
        <id>P03372</id>
        <label>ESR1</label>
    </interactant>
    <organismsDiffer>false</organismsDiffer>
    <experiments>3</experiments>
</comment>
<comment type="interaction">
    <interactant intactId="EBI-3390132">
        <id>Q9BZ95</id>
    </interactant>
    <interactant intactId="EBI-10183977">
        <id>V9HWG0</id>
        <label>HEL25</label>
    </interactant>
    <organismsDiffer>false</organismsDiffer>
    <experiments>3</experiments>
</comment>
<comment type="interaction">
    <interactant intactId="EBI-3390132">
        <id>Q9BZ95</id>
    </interactant>
    <interactant intactId="EBI-3923226">
        <id>P09017</id>
        <label>HOXC4</label>
    </interactant>
    <organismsDiffer>false</organismsDiffer>
    <experiments>2</experiments>
</comment>
<comment type="interaction">
    <interactant intactId="EBI-3390132">
        <id>Q9BZ95</id>
    </interactant>
    <interactant intactId="EBI-5773143">
        <id>Q6P2C6</id>
        <label>MLLT6</label>
    </interactant>
    <organismsDiffer>false</organismsDiffer>
    <experiments>3</experiments>
</comment>
<comment type="interaction">
    <interactant intactId="EBI-3390132">
        <id>Q9BZ95</id>
    </interactant>
    <interactant intactId="EBI-2829677">
        <id>P41218</id>
        <label>MNDA</label>
    </interactant>
    <organismsDiffer>false</organismsDiffer>
    <experiments>2</experiments>
</comment>
<comment type="interaction">
    <interactant intactId="EBI-3390132">
        <id>Q9BZ95</id>
    </interactant>
    <interactant intactId="EBI-297202">
        <id>Q06609</id>
        <label>RAD51</label>
    </interactant>
    <organismsDiffer>false</organismsDiffer>
    <experiments>4</experiments>
</comment>
<comment type="interaction">
    <interactant intactId="EBI-3390132">
        <id>Q9BZ95</id>
    </interactant>
    <interactant intactId="EBI-750559">
        <id>O95391</id>
        <label>SLU7</label>
    </interactant>
    <organismsDiffer>false</organismsDiffer>
    <experiments>2</experiments>
</comment>
<comment type="interaction">
    <interactant intactId="EBI-22002759">
        <id>Q9BZ95-3</id>
    </interactant>
    <interactant intactId="EBI-78219">
        <id>P45973</id>
        <label>CBX5</label>
    </interactant>
    <organismsDiffer>false</organismsDiffer>
    <experiments>3</experiments>
</comment>
<comment type="interaction">
    <interactant intactId="EBI-22002759">
        <id>Q9BZ95-3</id>
    </interactant>
    <interactant intactId="EBI-348399">
        <id>P22607</id>
        <label>FGFR3</label>
    </interactant>
    <organismsDiffer>false</organismsDiffer>
    <experiments>3</experiments>
</comment>
<comment type="interaction">
    <interactant intactId="EBI-22002759">
        <id>Q9BZ95-3</id>
    </interactant>
    <interactant intactId="EBI-350145">
        <id>P01112</id>
        <label>HRAS</label>
    </interactant>
    <organismsDiffer>false</organismsDiffer>
    <experiments>3</experiments>
</comment>
<comment type="interaction">
    <interactant intactId="EBI-22002759">
        <id>Q9BZ95-3</id>
    </interactant>
    <interactant intactId="EBI-351935">
        <id>P02545</id>
        <label>LMNA</label>
    </interactant>
    <organismsDiffer>false</organismsDiffer>
    <experiments>3</experiments>
</comment>
<comment type="interaction">
    <interactant intactId="EBI-22002759">
        <id>Q9BZ95-3</id>
    </interactant>
    <interactant intactId="EBI-5235340">
        <id>Q7Z699</id>
        <label>SPRED1</label>
    </interactant>
    <organismsDiffer>false</organismsDiffer>
    <experiments>3</experiments>
</comment>
<comment type="interaction">
    <interactant intactId="EBI-22002759">
        <id>Q9BZ95-3</id>
    </interactant>
    <interactant intactId="EBI-296151">
        <id>P37173</id>
        <label>TGFBR2</label>
    </interactant>
    <organismsDiffer>false</organismsDiffer>
    <experiments>3</experiments>
</comment>
<comment type="interaction">
    <interactant intactId="EBI-22002759">
        <id>Q9BZ95-3</id>
    </interactant>
    <interactant intactId="EBI-25900580">
        <id>Q9Y649</id>
    </interactant>
    <organismsDiffer>false</organismsDiffer>
    <experiments>3</experiments>
</comment>
<comment type="subcellular location">
    <subcellularLocation>
        <location evidence="1">Nucleus</location>
    </subcellularLocation>
    <subcellularLocation>
        <location evidence="1">Chromosome</location>
    </subcellularLocation>
</comment>
<comment type="alternative products">
    <event type="alternative splicing"/>
    <isoform>
        <id>Q9BZ95-1</id>
        <name>1</name>
        <sequence type="displayed"/>
    </isoform>
    <isoform>
        <id>Q9BZ95-2</id>
        <name>2</name>
        <sequence type="described" ref="VSP_021430"/>
    </isoform>
    <isoform>
        <id>Q9BZ95-3</id>
        <name>3</name>
        <sequence type="described" ref="VSP_021428 VSP_021429"/>
    </isoform>
    <isoform>
        <id>Q9BZ95-4</id>
        <name>4</name>
        <sequence type="described" ref="VSP_021427"/>
    </isoform>
    <isoform>
        <id>Q9BZ95-5</id>
        <name>5</name>
        <sequence type="described" ref="VSP_054489"/>
    </isoform>
</comment>
<comment type="tissue specificity">
    <text evidence="9">Highly expressed in brain, heart and skeletal muscle. Expressed at lower level in liver and lung.</text>
</comment>
<comment type="domain">
    <text evidence="15">The KIKL motif recognizes and binds the NET domain of BRD3.</text>
</comment>
<comment type="disease">
    <text evidence="11">Defects in NSD3 may be involved in non small cell lung carcinomas (NSCLC). Amplified or overexpressed in NSCLC.</text>
</comment>
<comment type="disease">
    <text evidence="10">A chromosomal aberration involving NSD3 is found in childhood acute myeloid leukemia. Translocation t(8;11)(p11.2;p15) with NUP98.</text>
</comment>
<comment type="similarity">
    <text evidence="6">Belongs to the class V-like SAM-binding methyltransferase superfamily. Histone-lysine methyltransferase family. SET2 subfamily.</text>
</comment>
<comment type="sequence caution" evidence="22">
    <conflict type="frameshift">
        <sequence resource="EMBL-CDS" id="AAG44637"/>
    </conflict>
</comment>
<comment type="sequence caution" evidence="22">
    <conflict type="miscellaneous discrepancy">
        <sequence resource="EMBL-CDS" id="AAI07735"/>
    </conflict>
    <text>Contaminating sequence. Potential poly-A sequence.</text>
</comment>
<comment type="sequence caution" evidence="22">
    <conflict type="erroneous initiation">
        <sequence resource="EMBL-CDS" id="BAA91110"/>
    </conflict>
    <text>Truncated N-terminus.</text>
</comment>
<comment type="online information" name="Atlas of Genetics and Cytogenetics in Oncology and Haematology">
    <link uri="https://atlasgeneticsoncology.org/gene/42810/WHSC1L1NSD3"/>
</comment>
<gene>
    <name evidence="23" type="primary">NSD3</name>
    <name type="synonym">WHSC1L1</name>
    <name type="ORF">DC28</name>
</gene>
<reference key="1">
    <citation type="journal article" date="2001" name="Genomics">
        <title>WHSC1L1, on human chromosome 8p11.2, closely resembles WHSC1 and maps to a duplicated region shared with 4p16.3.</title>
        <authorList>
            <person name="Stec I."/>
            <person name="van Ommen G.-J.B."/>
            <person name="den Dunnen J.T."/>
        </authorList>
    </citation>
    <scope>NUCLEOTIDE SEQUENCE [MRNA] (ISOFORMS 1 AND 3)</scope>
</reference>
<reference key="2">
    <citation type="journal article" date="2001" name="Genomics">
        <title>NSD3, a new SET domain-containing gene, maps to 8p12 and is amplified in human breast cancer cell lines.</title>
        <authorList>
            <person name="Angrand P.-O."/>
            <person name="Apiou F."/>
            <person name="Stewart F."/>
            <person name="Dutrillaux B."/>
            <person name="Losson R."/>
            <person name="Chambon P."/>
        </authorList>
    </citation>
    <scope>NUCLEOTIDE SEQUENCE [MRNA] (ISOFORMS 1; 2 AND 3)</scope>
    <scope>TISSUE SPECIFICITY</scope>
</reference>
<reference key="3">
    <citation type="submission" date="2000-05" db="EMBL/GenBank/DDBJ databases">
        <title>A novel gene from human dendritic cells.</title>
        <authorList>
            <person name="Xu X."/>
            <person name="Yang Y."/>
            <person name="Gao G."/>
            <person name="Xiao H."/>
            <person name="Chen Z."/>
            <person name="Han Z."/>
        </authorList>
    </citation>
    <scope>NUCLEOTIDE SEQUENCE [LARGE SCALE MRNA] (ISOFORM 3)</scope>
    <source>
        <tissue>Dendritic cell</tissue>
    </source>
</reference>
<reference key="4">
    <citation type="journal article" date="2004" name="Nat. Genet.">
        <title>Complete sequencing and characterization of 21,243 full-length human cDNAs.</title>
        <authorList>
            <person name="Ota T."/>
            <person name="Suzuki Y."/>
            <person name="Nishikawa T."/>
            <person name="Otsuki T."/>
            <person name="Sugiyama T."/>
            <person name="Irie R."/>
            <person name="Wakamatsu A."/>
            <person name="Hayashi K."/>
            <person name="Sato H."/>
            <person name="Nagai K."/>
            <person name="Kimura K."/>
            <person name="Makita H."/>
            <person name="Sekine M."/>
            <person name="Obayashi M."/>
            <person name="Nishi T."/>
            <person name="Shibahara T."/>
            <person name="Tanaka T."/>
            <person name="Ishii S."/>
            <person name="Yamamoto J."/>
            <person name="Saito K."/>
            <person name="Kawai Y."/>
            <person name="Isono Y."/>
            <person name="Nakamura Y."/>
            <person name="Nagahari K."/>
            <person name="Murakami K."/>
            <person name="Yasuda T."/>
            <person name="Iwayanagi T."/>
            <person name="Wagatsuma M."/>
            <person name="Shiratori A."/>
            <person name="Sudo H."/>
            <person name="Hosoiri T."/>
            <person name="Kaku Y."/>
            <person name="Kodaira H."/>
            <person name="Kondo H."/>
            <person name="Sugawara M."/>
            <person name="Takahashi M."/>
            <person name="Kanda K."/>
            <person name="Yokoi T."/>
            <person name="Furuya T."/>
            <person name="Kikkawa E."/>
            <person name="Omura Y."/>
            <person name="Abe K."/>
            <person name="Kamihara K."/>
            <person name="Katsuta N."/>
            <person name="Sato K."/>
            <person name="Tanikawa M."/>
            <person name="Yamazaki M."/>
            <person name="Ninomiya K."/>
            <person name="Ishibashi T."/>
            <person name="Yamashita H."/>
            <person name="Murakawa K."/>
            <person name="Fujimori K."/>
            <person name="Tanai H."/>
            <person name="Kimata M."/>
            <person name="Watanabe M."/>
            <person name="Hiraoka S."/>
            <person name="Chiba Y."/>
            <person name="Ishida S."/>
            <person name="Ono Y."/>
            <person name="Takiguchi S."/>
            <person name="Watanabe S."/>
            <person name="Yosida M."/>
            <person name="Hotuta T."/>
            <person name="Kusano J."/>
            <person name="Kanehori K."/>
            <person name="Takahashi-Fujii A."/>
            <person name="Hara H."/>
            <person name="Tanase T.-O."/>
            <person name="Nomura Y."/>
            <person name="Togiya S."/>
            <person name="Komai F."/>
            <person name="Hara R."/>
            <person name="Takeuchi K."/>
            <person name="Arita M."/>
            <person name="Imose N."/>
            <person name="Musashino K."/>
            <person name="Yuuki H."/>
            <person name="Oshima A."/>
            <person name="Sasaki N."/>
            <person name="Aotsuka S."/>
            <person name="Yoshikawa Y."/>
            <person name="Matsunawa H."/>
            <person name="Ichihara T."/>
            <person name="Shiohata N."/>
            <person name="Sano S."/>
            <person name="Moriya S."/>
            <person name="Momiyama H."/>
            <person name="Satoh N."/>
            <person name="Takami S."/>
            <person name="Terashima Y."/>
            <person name="Suzuki O."/>
            <person name="Nakagawa S."/>
            <person name="Senoh A."/>
            <person name="Mizoguchi H."/>
            <person name="Goto Y."/>
            <person name="Shimizu F."/>
            <person name="Wakebe H."/>
            <person name="Hishigaki H."/>
            <person name="Watanabe T."/>
            <person name="Sugiyama A."/>
            <person name="Takemoto M."/>
            <person name="Kawakami B."/>
            <person name="Yamazaki M."/>
            <person name="Watanabe K."/>
            <person name="Kumagai A."/>
            <person name="Itakura S."/>
            <person name="Fukuzumi Y."/>
            <person name="Fujimori Y."/>
            <person name="Komiyama M."/>
            <person name="Tashiro H."/>
            <person name="Tanigami A."/>
            <person name="Fujiwara T."/>
            <person name="Ono T."/>
            <person name="Yamada K."/>
            <person name="Fujii Y."/>
            <person name="Ozaki K."/>
            <person name="Hirao M."/>
            <person name="Ohmori Y."/>
            <person name="Kawabata A."/>
            <person name="Hikiji T."/>
            <person name="Kobatake N."/>
            <person name="Inagaki H."/>
            <person name="Ikema Y."/>
            <person name="Okamoto S."/>
            <person name="Okitani R."/>
            <person name="Kawakami T."/>
            <person name="Noguchi S."/>
            <person name="Itoh T."/>
            <person name="Shigeta K."/>
            <person name="Senba T."/>
            <person name="Matsumura K."/>
            <person name="Nakajima Y."/>
            <person name="Mizuno T."/>
            <person name="Morinaga M."/>
            <person name="Sasaki M."/>
            <person name="Togashi T."/>
            <person name="Oyama M."/>
            <person name="Hata H."/>
            <person name="Watanabe M."/>
            <person name="Komatsu T."/>
            <person name="Mizushima-Sugano J."/>
            <person name="Satoh T."/>
            <person name="Shirai Y."/>
            <person name="Takahashi Y."/>
            <person name="Nakagawa K."/>
            <person name="Okumura K."/>
            <person name="Nagase T."/>
            <person name="Nomura N."/>
            <person name="Kikuchi H."/>
            <person name="Masuho Y."/>
            <person name="Yamashita R."/>
            <person name="Nakai K."/>
            <person name="Yada T."/>
            <person name="Nakamura Y."/>
            <person name="Ohara O."/>
            <person name="Isogai T."/>
            <person name="Sugano S."/>
        </authorList>
    </citation>
    <scope>NUCLEOTIDE SEQUENCE [LARGE SCALE MRNA] (ISOFORM 3)</scope>
    <scope>NUCLEOTIDE SEQUENCE [LARGE SCALE MRNA] OF 1-383 (ISOFORM 4)</scope>
    <source>
        <tissue>Brain</tissue>
        <tissue>Teratocarcinoma</tissue>
    </source>
</reference>
<reference key="5">
    <citation type="journal article" date="2006" name="Nature">
        <title>DNA sequence and analysis of human chromosome 8.</title>
        <authorList>
            <person name="Nusbaum C."/>
            <person name="Mikkelsen T.S."/>
            <person name="Zody M.C."/>
            <person name="Asakawa S."/>
            <person name="Taudien S."/>
            <person name="Garber M."/>
            <person name="Kodira C.D."/>
            <person name="Schueler M.G."/>
            <person name="Shimizu A."/>
            <person name="Whittaker C.A."/>
            <person name="Chang J.L."/>
            <person name="Cuomo C.A."/>
            <person name="Dewar K."/>
            <person name="FitzGerald M.G."/>
            <person name="Yang X."/>
            <person name="Allen N.R."/>
            <person name="Anderson S."/>
            <person name="Asakawa T."/>
            <person name="Blechschmidt K."/>
            <person name="Bloom T."/>
            <person name="Borowsky M.L."/>
            <person name="Butler J."/>
            <person name="Cook A."/>
            <person name="Corum B."/>
            <person name="DeArellano K."/>
            <person name="DeCaprio D."/>
            <person name="Dooley K.T."/>
            <person name="Dorris L. III"/>
            <person name="Engels R."/>
            <person name="Gloeckner G."/>
            <person name="Hafez N."/>
            <person name="Hagopian D.S."/>
            <person name="Hall J.L."/>
            <person name="Ishikawa S.K."/>
            <person name="Jaffe D.B."/>
            <person name="Kamat A."/>
            <person name="Kudoh J."/>
            <person name="Lehmann R."/>
            <person name="Lokitsang T."/>
            <person name="Macdonald P."/>
            <person name="Major J.E."/>
            <person name="Matthews C.D."/>
            <person name="Mauceli E."/>
            <person name="Menzel U."/>
            <person name="Mihalev A.H."/>
            <person name="Minoshima S."/>
            <person name="Murayama Y."/>
            <person name="Naylor J.W."/>
            <person name="Nicol R."/>
            <person name="Nguyen C."/>
            <person name="O'Leary S.B."/>
            <person name="O'Neill K."/>
            <person name="Parker S.C.J."/>
            <person name="Polley A."/>
            <person name="Raymond C.K."/>
            <person name="Reichwald K."/>
            <person name="Rodriguez J."/>
            <person name="Sasaki T."/>
            <person name="Schilhabel M."/>
            <person name="Siddiqui R."/>
            <person name="Smith C.L."/>
            <person name="Sneddon T.P."/>
            <person name="Talamas J.A."/>
            <person name="Tenzin P."/>
            <person name="Topham K."/>
            <person name="Venkataraman V."/>
            <person name="Wen G."/>
            <person name="Yamazaki S."/>
            <person name="Young S.K."/>
            <person name="Zeng Q."/>
            <person name="Zimmer A.R."/>
            <person name="Rosenthal A."/>
            <person name="Birren B.W."/>
            <person name="Platzer M."/>
            <person name="Shimizu N."/>
            <person name="Lander E.S."/>
        </authorList>
    </citation>
    <scope>NUCLEOTIDE SEQUENCE [LARGE SCALE GENOMIC DNA]</scope>
</reference>
<reference key="6">
    <citation type="submission" date="2005-09" db="EMBL/GenBank/DDBJ databases">
        <authorList>
            <person name="Mural R.J."/>
            <person name="Istrail S."/>
            <person name="Sutton G.G."/>
            <person name="Florea L."/>
            <person name="Halpern A.L."/>
            <person name="Mobarry C.M."/>
            <person name="Lippert R."/>
            <person name="Walenz B."/>
            <person name="Shatkay H."/>
            <person name="Dew I."/>
            <person name="Miller J.R."/>
            <person name="Flanigan M.J."/>
            <person name="Edwards N.J."/>
            <person name="Bolanos R."/>
            <person name="Fasulo D."/>
            <person name="Halldorsson B.V."/>
            <person name="Hannenhalli S."/>
            <person name="Turner R."/>
            <person name="Yooseph S."/>
            <person name="Lu F."/>
            <person name="Nusskern D.R."/>
            <person name="Shue B.C."/>
            <person name="Zheng X.H."/>
            <person name="Zhong F."/>
            <person name="Delcher A.L."/>
            <person name="Huson D.H."/>
            <person name="Kravitz S.A."/>
            <person name="Mouchard L."/>
            <person name="Reinert K."/>
            <person name="Remington K.A."/>
            <person name="Clark A.G."/>
            <person name="Waterman M.S."/>
            <person name="Eichler E.E."/>
            <person name="Adams M.D."/>
            <person name="Hunkapiller M.W."/>
            <person name="Myers E.W."/>
            <person name="Venter J.C."/>
        </authorList>
    </citation>
    <scope>NUCLEOTIDE SEQUENCE [LARGE SCALE GENOMIC DNA]</scope>
</reference>
<reference key="7">
    <citation type="journal article" date="2004" name="Genome Res.">
        <title>The status, quality, and expansion of the NIH full-length cDNA project: the Mammalian Gene Collection (MGC).</title>
        <authorList>
            <consortium name="The MGC Project Team"/>
        </authorList>
    </citation>
    <scope>NUCLEOTIDE SEQUENCE [LARGE SCALE MRNA] (ISOFORMS 1; 3 AND 5)</scope>
    <source>
        <tissue>Brain</tissue>
        <tissue>Placenta</tissue>
    </source>
</reference>
<reference key="8">
    <citation type="journal article" date="2002" name="Blood">
        <title>NUP98 is fused to the NSD3 gene in acute myeloid leukemia associated with t(8;11)(p11.2;p15).</title>
        <authorList>
            <person name="Rosati R."/>
            <person name="La Starza R."/>
            <person name="Veronese A."/>
            <person name="Aventin A."/>
            <person name="Schwienbacher C."/>
            <person name="Vallespi T."/>
            <person name="Negrini M."/>
            <person name="Martelli M.F."/>
            <person name="Mecucci C."/>
        </authorList>
    </citation>
    <scope>CHROMOSOMAL TRANSLOCATION WITH NUP98</scope>
</reference>
<reference key="9">
    <citation type="journal article" date="2005" name="Proc. Natl. Acad. Sci. U.S.A.">
        <title>High-resolution genomic profiles of human lung cancer.</title>
        <authorList>
            <person name="Tonon G."/>
            <person name="Wong K.-K."/>
            <person name="Maulik G."/>
            <person name="Brennan C."/>
            <person name="Feng B."/>
            <person name="Zhang Y."/>
            <person name="Khatry D.B."/>
            <person name="Protopopov A."/>
            <person name="You M.J."/>
            <person name="Aguirre A.J."/>
            <person name="Martin E.S."/>
            <person name="Yang Z."/>
            <person name="Ji H."/>
            <person name="Chin L."/>
            <person name="Depinho R.A."/>
        </authorList>
    </citation>
    <scope>INVOLVEMENT IN NSCLC</scope>
</reference>
<reference key="10">
    <citation type="journal article" date="2006" name="Biochem. Biophys. Res. Commun.">
        <title>Characterization of a novel WHSC1-associated SET domain protein with H3K4 and H3K27 methyltransferase activity.</title>
        <authorList>
            <person name="Kim S.M."/>
            <person name="Kee H.J."/>
            <person name="Eom G.H."/>
            <person name="Choe N.W."/>
            <person name="Kim J.Y."/>
            <person name="Kim Y.S."/>
            <person name="Kim S.K."/>
            <person name="Kook H."/>
            <person name="Kook H."/>
            <person name="Seo S.B."/>
        </authorList>
    </citation>
    <scope>CATALYTIC ACTIVITY</scope>
    <scope>FUNCTION</scope>
</reference>
<reference key="11">
    <citation type="journal article" date="2009" name="Science">
        <title>Lysine acetylation targets protein complexes and co-regulates major cellular functions.</title>
        <authorList>
            <person name="Choudhary C."/>
            <person name="Kumar C."/>
            <person name="Gnad F."/>
            <person name="Nielsen M.L."/>
            <person name="Rehman M."/>
            <person name="Walther T.C."/>
            <person name="Olsen J.V."/>
            <person name="Mann M."/>
        </authorList>
    </citation>
    <scope>ACETYLATION [LARGE SCALE ANALYSIS] AT LYS-790</scope>
    <scope>IDENTIFICATION BY MASS SPECTROMETRY [LARGE SCALE ANALYSIS]</scope>
</reference>
<reference key="12">
    <citation type="journal article" date="2011" name="Mol. Cell. Biol.">
        <title>The Brd4 extraterminal domain confers transcription activation independent of pTEFb by recruiting multiple proteins, including NSD3.</title>
        <authorList>
            <person name="Rahman S."/>
            <person name="Sowa M.E."/>
            <person name="Ottinger M."/>
            <person name="Smith J.A."/>
            <person name="Shi Y."/>
            <person name="Harper J.W."/>
            <person name="Howley P.M."/>
        </authorList>
    </citation>
    <scope>INTERACTION WITH BRD4</scope>
</reference>
<reference key="13">
    <citation type="journal article" date="2011" name="Sci. Signal.">
        <title>System-wide temporal characterization of the proteome and phosphoproteome of human embryonic stem cell differentiation.</title>
        <authorList>
            <person name="Rigbolt K.T."/>
            <person name="Prokhorova T.A."/>
            <person name="Akimov V."/>
            <person name="Henningsen J."/>
            <person name="Johansen P.T."/>
            <person name="Kratchmarova I."/>
            <person name="Kassem M."/>
            <person name="Mann M."/>
            <person name="Olsen J.V."/>
            <person name="Blagoev B."/>
        </authorList>
    </citation>
    <scope>PHOSPHORYLATION [LARGE SCALE ANALYSIS] AT SER-150</scope>
    <scope>IDENTIFICATION BY MASS SPECTROMETRY [LARGE SCALE ANALYSIS]</scope>
</reference>
<reference key="14">
    <citation type="journal article" date="2013" name="J. Proteome Res.">
        <title>Toward a comprehensive characterization of a human cancer cell phosphoproteome.</title>
        <authorList>
            <person name="Zhou H."/>
            <person name="Di Palma S."/>
            <person name="Preisinger C."/>
            <person name="Peng M."/>
            <person name="Polat A.N."/>
            <person name="Heck A.J."/>
            <person name="Mohammed S."/>
        </authorList>
    </citation>
    <scope>PHOSPHORYLATION [LARGE SCALE ANALYSIS] AT SER-457; SER-585; SER-587; SER-590 AND SER-655</scope>
    <scope>IDENTIFICATION BY MASS SPECTROMETRY [LARGE SCALE ANALYSIS]</scope>
    <source>
        <tissue>Cervix carcinoma</tissue>
        <tissue>Erythroleukemia</tissue>
    </source>
</reference>
<reference key="15">
    <citation type="journal article" date="2014" name="Nat. Struct. Mol. Biol.">
        <title>Uncovering global SUMOylation signaling networks in a site-specific manner.</title>
        <authorList>
            <person name="Hendriks I.A."/>
            <person name="D'Souza R.C."/>
            <person name="Yang B."/>
            <person name="Verlaan-de Vries M."/>
            <person name="Mann M."/>
            <person name="Vertegaal A.C."/>
        </authorList>
    </citation>
    <scope>SUMOYLATION [LARGE SCALE ANALYSIS] AT LYS-245; LYS-532 AND LYS-1151</scope>
    <scope>IDENTIFICATION BY MASS SPECTROMETRY [LARGE SCALE ANALYSIS]</scope>
</reference>
<reference key="16">
    <citation type="journal article" date="2015" name="Cell Rep.">
        <title>SUMO-2 orchestrates chromatin modifiers in response to DNA damage.</title>
        <authorList>
            <person name="Hendriks I.A."/>
            <person name="Treffers L.W."/>
            <person name="Verlaan-de Vries M."/>
            <person name="Olsen J.V."/>
            <person name="Vertegaal A.C."/>
        </authorList>
    </citation>
    <scope>SUMOYLATION [LARGE SCALE ANALYSIS] AT LYS-245</scope>
    <scope>IDENTIFICATION BY MASS SPECTROMETRY [LARGE SCALE ANALYSIS]</scope>
</reference>
<reference key="17">
    <citation type="journal article" date="2015" name="Mol. Cell. Proteomics">
        <title>System-wide analysis of SUMOylation dynamics in response to replication stress reveals novel small ubiquitin-like modified target proteins and acceptor lysines relevant for genome stability.</title>
        <authorList>
            <person name="Xiao Z."/>
            <person name="Chang J.G."/>
            <person name="Hendriks I.A."/>
            <person name="Sigurdsson J.O."/>
            <person name="Olsen J.V."/>
            <person name="Vertegaal A.C."/>
        </authorList>
    </citation>
    <scope>SUMOYLATION [LARGE SCALE ANALYSIS] AT LYS-218</scope>
    <scope>IDENTIFICATION BY MASS SPECTROMETRY [LARGE SCALE ANALYSIS]</scope>
</reference>
<reference key="18">
    <citation type="journal article" date="2017" name="Nat. Struct. Mol. Biol.">
        <title>Site-specific mapping of the human SUMO proteome reveals co-modification with phosphorylation.</title>
        <authorList>
            <person name="Hendriks I.A."/>
            <person name="Lyon D."/>
            <person name="Young C."/>
            <person name="Jensen L.J."/>
            <person name="Vertegaal A.C."/>
            <person name="Nielsen M.L."/>
        </authorList>
    </citation>
    <scope>SUMOYLATION [LARGE SCALE ANALYSIS] AT LYS-218; LYS-245; LYS-413; LYS-502; LYS-532 AND LYS-628</scope>
    <scope>IDENTIFICATION BY MASS SPECTROMETRY [LARGE SCALE ANALYSIS]</scope>
</reference>
<reference key="19">
    <citation type="journal article" date="2017" name="Sci. Rep.">
        <title>Structural Mechanism of the Oxygenase JMJD6 Recognition by the Extraterminal (ET) Domain of BRD4.</title>
        <authorList>
            <person name="Konuma T."/>
            <person name="Yu D."/>
            <person name="Zhao C."/>
            <person name="Ju Y."/>
            <person name="Sharma R."/>
            <person name="Ren C."/>
            <person name="Zhang Q."/>
            <person name="Zhou M.M."/>
            <person name="Zeng L."/>
        </authorList>
    </citation>
    <scope>INTERACTION WITH BRD4</scope>
</reference>
<reference key="20">
    <citation type="journal article" date="2018" name="J. Biol. Chem.">
        <title>The BRD3 ET domain recognizes a short peptide motif through a mechanism that is conserved across chromatin remodelers and transcriptional regulators.</title>
        <authorList>
            <person name="Wai D.C.C."/>
            <person name="Szyszka T.N."/>
            <person name="Campbell A.E."/>
            <person name="Kwong C."/>
            <person name="Wilkinson-White L.E."/>
            <person name="Silva A.P.G."/>
            <person name="Low J.K.K."/>
            <person name="Kwan A.H."/>
            <person name="Gamsjaeger R."/>
            <person name="Chalmers J.D."/>
            <person name="Patrick W.M."/>
            <person name="Lu B."/>
            <person name="Vakoc C.R."/>
            <person name="Blobel G.A."/>
            <person name="Mackay J.P."/>
        </authorList>
    </citation>
    <scope>INTERACTION WITH BRD3</scope>
    <scope>DOMAIN</scope>
</reference>
<reference key="21">
    <citation type="submission" date="2005-12" db="PDB data bank">
        <title>Solution structure of second PWWP domain of WHSC1L1 protein.</title>
        <authorList>
            <consortium name="RIKEN structural genomics initiative (RSGI)"/>
        </authorList>
    </citation>
    <scope>STRUCTURE BY NMR OF 957-1053</scope>
</reference>
<reference evidence="24" key="22">
    <citation type="journal article" date="2021" name="Structure">
        <title>A common binding motif in the ET domain of BRD3 forms polymorphic structural interfaces with host and viral proteins.</title>
        <authorList>
            <person name="Aiyer S."/>
            <person name="Swapna G.V.T."/>
            <person name="Ma L.C."/>
            <person name="Liu G."/>
            <person name="Hao J."/>
            <person name="Chalmers G."/>
            <person name="Jacobs B.C."/>
            <person name="Montelione G.T."/>
            <person name="Roth M.J."/>
        </authorList>
    </citation>
    <scope>STRUCTURE BY NMR OF 148-184 IN COMPLEX WITH BRD3</scope>
    <scope>INTERACTION WITH BRD3</scope>
</reference>
<evidence type="ECO:0000250" key="1"/>
<evidence type="ECO:0000255" key="2"/>
<evidence type="ECO:0000255" key="3">
    <source>
        <dbReference type="PROSITE-ProRule" id="PRU00146"/>
    </source>
</evidence>
<evidence type="ECO:0000255" key="4">
    <source>
        <dbReference type="PROSITE-ProRule" id="PRU00155"/>
    </source>
</evidence>
<evidence type="ECO:0000255" key="5">
    <source>
        <dbReference type="PROSITE-ProRule" id="PRU00162"/>
    </source>
</evidence>
<evidence type="ECO:0000255" key="6">
    <source>
        <dbReference type="PROSITE-ProRule" id="PRU00190"/>
    </source>
</evidence>
<evidence type="ECO:0000255" key="7">
    <source>
        <dbReference type="PROSITE-ProRule" id="PRU00562"/>
    </source>
</evidence>
<evidence type="ECO:0000256" key="8">
    <source>
        <dbReference type="SAM" id="MobiDB-lite"/>
    </source>
</evidence>
<evidence type="ECO:0000269" key="9">
    <source>
    </source>
</evidence>
<evidence type="ECO:0000269" key="10">
    <source>
    </source>
</evidence>
<evidence type="ECO:0000269" key="11">
    <source>
    </source>
</evidence>
<evidence type="ECO:0000269" key="12">
    <source>
    </source>
</evidence>
<evidence type="ECO:0000269" key="13">
    <source>
    </source>
</evidence>
<evidence type="ECO:0000269" key="14">
    <source>
    </source>
</evidence>
<evidence type="ECO:0000269" key="15">
    <source>
    </source>
</evidence>
<evidence type="ECO:0000269" key="16">
    <source>
    </source>
</evidence>
<evidence type="ECO:0000303" key="17">
    <source>
    </source>
</evidence>
<evidence type="ECO:0000303" key="18">
    <source>
    </source>
</evidence>
<evidence type="ECO:0000303" key="19">
    <source>
    </source>
</evidence>
<evidence type="ECO:0000303" key="20">
    <source>
    </source>
</evidence>
<evidence type="ECO:0000303" key="21">
    <source ref="3"/>
</evidence>
<evidence type="ECO:0000305" key="22"/>
<evidence type="ECO:0000312" key="23">
    <source>
        <dbReference type="HGNC" id="HGNC:12767"/>
    </source>
</evidence>
<evidence type="ECO:0007744" key="24">
    <source>
        <dbReference type="PDB" id="7JYN"/>
    </source>
</evidence>
<evidence type="ECO:0007744" key="25">
    <source>
    </source>
</evidence>
<evidence type="ECO:0007744" key="26">
    <source>
    </source>
</evidence>
<evidence type="ECO:0007744" key="27">
    <source>
    </source>
</evidence>
<evidence type="ECO:0007744" key="28">
    <source>
    </source>
</evidence>
<evidence type="ECO:0007744" key="29">
    <source>
    </source>
</evidence>
<evidence type="ECO:0007744" key="30">
    <source>
    </source>
</evidence>
<evidence type="ECO:0007744" key="31">
    <source>
    </source>
</evidence>
<evidence type="ECO:0007829" key="32">
    <source>
        <dbReference type="PDB" id="2DAQ"/>
    </source>
</evidence>
<evidence type="ECO:0007829" key="33">
    <source>
        <dbReference type="PDB" id="2NCZ"/>
    </source>
</evidence>
<evidence type="ECO:0007829" key="34">
    <source>
        <dbReference type="PDB" id="4GNE"/>
    </source>
</evidence>
<evidence type="ECO:0007829" key="35">
    <source>
        <dbReference type="PDB" id="4GNF"/>
    </source>
</evidence>
<evidence type="ECO:0007829" key="36">
    <source>
        <dbReference type="PDB" id="4GNG"/>
    </source>
</evidence>
<evidence type="ECO:0007829" key="37">
    <source>
        <dbReference type="PDB" id="4RXJ"/>
    </source>
</evidence>
<evidence type="ECO:0007829" key="38">
    <source>
        <dbReference type="PDB" id="5UPD"/>
    </source>
</evidence>
<evidence type="ECO:0007829" key="39">
    <source>
        <dbReference type="PDB" id="6CEN"/>
    </source>
</evidence>
<evidence type="ECO:0007829" key="40">
    <source>
        <dbReference type="PDB" id="6G25"/>
    </source>
</evidence>
<evidence type="ECO:0007829" key="41">
    <source>
        <dbReference type="PDB" id="6G3P"/>
    </source>
</evidence>
<evidence type="ECO:0007829" key="42">
    <source>
        <dbReference type="PDB" id="6G3T"/>
    </source>
</evidence>
<evidence type="ECO:0007829" key="43">
    <source>
        <dbReference type="PDB" id="7CRQ"/>
    </source>
</evidence>
<evidence type="ECO:0007829" key="44">
    <source>
        <dbReference type="PDB" id="7JYN"/>
    </source>
</evidence>
<feature type="chain" id="PRO_0000259521" description="Histone-lysine N-methyltransferase NSD3">
    <location>
        <begin position="1"/>
        <end position="1437"/>
    </location>
</feature>
<feature type="domain" description="PWWP 1" evidence="5">
    <location>
        <begin position="270"/>
        <end position="333"/>
    </location>
</feature>
<feature type="domain" description="PWWP 2" evidence="5">
    <location>
        <begin position="960"/>
        <end position="1022"/>
    </location>
</feature>
<feature type="domain" description="AWS" evidence="7">
    <location>
        <begin position="1093"/>
        <end position="1143"/>
    </location>
</feature>
<feature type="domain" description="SET" evidence="6">
    <location>
        <begin position="1145"/>
        <end position="1262"/>
    </location>
</feature>
<feature type="domain" description="Post-SET" evidence="4">
    <location>
        <begin position="1269"/>
        <end position="1285"/>
    </location>
</feature>
<feature type="zinc finger region" description="PHD-type 1" evidence="3">
    <location>
        <begin position="701"/>
        <end position="748"/>
    </location>
</feature>
<feature type="zinc finger region" description="PHD-type 2" evidence="3">
    <location>
        <begin position="749"/>
        <end position="805"/>
    </location>
</feature>
<feature type="zinc finger region" description="PHD-type 3" evidence="3">
    <location>
        <begin position="862"/>
        <end position="955"/>
    </location>
</feature>
<feature type="zinc finger region" description="PHD-type 4; atypical" evidence="3">
    <location>
        <begin position="1321"/>
        <end position="1368"/>
    </location>
</feature>
<feature type="region of interest" description="Disordered" evidence="8">
    <location>
        <begin position="121"/>
        <end position="157"/>
    </location>
</feature>
<feature type="region of interest" description="Disordered" evidence="8">
    <location>
        <begin position="181"/>
        <end position="252"/>
    </location>
</feature>
<feature type="region of interest" description="Disordered" evidence="8">
    <location>
        <begin position="344"/>
        <end position="365"/>
    </location>
</feature>
<feature type="region of interest" description="Disordered" evidence="8">
    <location>
        <begin position="406"/>
        <end position="465"/>
    </location>
</feature>
<feature type="region of interest" description="Disordered" evidence="8">
    <location>
        <begin position="540"/>
        <end position="696"/>
    </location>
</feature>
<feature type="coiled-coil region" evidence="2">
    <location>
        <begin position="1033"/>
        <end position="1069"/>
    </location>
</feature>
<feature type="short sequence motif" description="KIKL" evidence="15">
    <location>
        <begin position="154"/>
        <end position="157"/>
    </location>
</feature>
<feature type="compositionally biased region" description="Pro residues" evidence="8">
    <location>
        <begin position="128"/>
        <end position="139"/>
    </location>
</feature>
<feature type="compositionally biased region" description="Basic residues" evidence="8">
    <location>
        <begin position="187"/>
        <end position="201"/>
    </location>
</feature>
<feature type="compositionally biased region" description="Basic and acidic residues" evidence="8">
    <location>
        <begin position="202"/>
        <end position="248"/>
    </location>
</feature>
<feature type="compositionally biased region" description="Polar residues" evidence="8">
    <location>
        <begin position="425"/>
        <end position="445"/>
    </location>
</feature>
<feature type="compositionally biased region" description="Polar residues" evidence="8">
    <location>
        <begin position="546"/>
        <end position="571"/>
    </location>
</feature>
<feature type="compositionally biased region" description="Basic and acidic residues" evidence="8">
    <location>
        <begin position="583"/>
        <end position="595"/>
    </location>
</feature>
<feature type="compositionally biased region" description="Polar residues" evidence="8">
    <location>
        <begin position="682"/>
        <end position="692"/>
    </location>
</feature>
<feature type="modified residue" description="Phosphoserine" evidence="26">
    <location>
        <position position="150"/>
    </location>
</feature>
<feature type="modified residue" description="Phosphoserine" evidence="27">
    <location>
        <position position="457"/>
    </location>
</feature>
<feature type="modified residue" description="Phosphoserine" evidence="27">
    <location>
        <position position="585"/>
    </location>
</feature>
<feature type="modified residue" description="Phosphoserine" evidence="27">
    <location>
        <position position="587"/>
    </location>
</feature>
<feature type="modified residue" description="Phosphoserine" evidence="27">
    <location>
        <position position="590"/>
    </location>
</feature>
<feature type="modified residue" description="Phosphoserine" evidence="27">
    <location>
        <position position="655"/>
    </location>
</feature>
<feature type="modified residue" description="N6-acetyllysine" evidence="25">
    <location>
        <position position="790"/>
    </location>
</feature>
<feature type="cross-link" description="Glycyl lysine isopeptide (Lys-Gly) (interchain with G-Cter in SUMO2)" evidence="29 31">
    <location>
        <position position="218"/>
    </location>
</feature>
<feature type="cross-link" description="Glycyl lysine isopeptide (Lys-Gly) (interchain with G-Cter in SUMO2)" evidence="28 30 31">
    <location>
        <position position="245"/>
    </location>
</feature>
<feature type="cross-link" description="Glycyl lysine isopeptide (Lys-Gly) (interchain with G-Cter in SUMO2)" evidence="31">
    <location>
        <position position="413"/>
    </location>
</feature>
<feature type="cross-link" description="Glycyl lysine isopeptide (Lys-Gly) (interchain with G-Cter in SUMO2)" evidence="31">
    <location>
        <position position="502"/>
    </location>
</feature>
<feature type="cross-link" description="Glycyl lysine isopeptide (Lys-Gly) (interchain with G-Cter in SUMO2)" evidence="28 31">
    <location>
        <position position="532"/>
    </location>
</feature>
<feature type="cross-link" description="Glycyl lysine isopeptide (Lys-Gly) (interchain with G-Cter in SUMO2)" evidence="31">
    <location>
        <position position="628"/>
    </location>
</feature>
<feature type="cross-link" description="Glycyl lysine isopeptide (Lys-Gly) (interchain with G-Cter in SUMO2)" evidence="28">
    <location>
        <position position="1151"/>
    </location>
</feature>
<feature type="splice variant" id="VSP_021427" description="In isoform 4." evidence="19">
    <location>
        <begin position="67"/>
        <end position="129"/>
    </location>
</feature>
<feature type="splice variant" id="VSP_021428" description="In isoform 3." evidence="17 18 19 20 21">
    <original>ASEISDSCKPLKKRSRASTDVEMTSS</original>
    <variation>SADRGVQGSVRFSDSSVSAAIEETVD</variation>
    <location>
        <begin position="620"/>
        <end position="645"/>
    </location>
</feature>
<feature type="splice variant" id="VSP_021429" description="In isoform 3." evidence="17 18 19 20 21">
    <location>
        <begin position="646"/>
        <end position="1437"/>
    </location>
</feature>
<feature type="splice variant" id="VSP_021430" description="In isoform 2." evidence="17">
    <location>
        <begin position="871"/>
        <end position="919"/>
    </location>
</feature>
<feature type="splice variant" id="VSP_054489" description="In isoform 5." evidence="20">
    <location>
        <begin position="1196"/>
        <end position="1206"/>
    </location>
</feature>
<feature type="sequence variant" id="VAR_061215" description="In dbSNP:rs13034.">
    <original>T</original>
    <variation>M</variation>
    <location>
        <position position="186"/>
    </location>
</feature>
<feature type="sequence variant" id="VAR_028950" description="In dbSNP:rs2234552.">
    <original>R</original>
    <variation>P</variation>
    <location>
        <position position="383"/>
    </location>
</feature>
<feature type="sequence conflict" description="In Ref. 7; AAI15007." evidence="22" ref="7">
    <original>G</original>
    <variation>R</variation>
    <location>
        <position position="436"/>
    </location>
</feature>
<feature type="sequence conflict" description="In Ref. 7; AAI15007." evidence="22" ref="7">
    <original>R</original>
    <variation>G</variation>
    <location>
        <position position="578"/>
    </location>
</feature>
<feature type="sequence conflict" description="In Ref. 2; CAC28350/CAC28351." evidence="22" ref="2">
    <original>G</original>
    <variation>E</variation>
    <location>
        <position position="829"/>
    </location>
</feature>
<feature type="sequence conflict" description="In Ref. 7; AAI15007." evidence="22" ref="7">
    <original>C</original>
    <variation>R</variation>
    <location>
        <position position="926"/>
    </location>
</feature>
<feature type="sequence conflict" description="In Ref. 7; AAI15007." evidence="22" ref="7">
    <original>K</original>
    <variation>R</variation>
    <location>
        <position position="1308"/>
    </location>
</feature>
<feature type="sequence conflict" description="In Ref. 7; AAI15007." evidence="22" ref="7">
    <original>D</original>
    <variation>G</variation>
    <location>
        <position position="1430"/>
    </location>
</feature>
<feature type="strand" evidence="33">
    <location>
        <begin position="154"/>
        <end position="158"/>
    </location>
</feature>
<feature type="strand" evidence="44">
    <location>
        <begin position="163"/>
        <end position="165"/>
    </location>
</feature>
<feature type="strand" evidence="44">
    <location>
        <begin position="169"/>
        <end position="171"/>
    </location>
</feature>
<feature type="helix" evidence="41">
    <location>
        <begin position="252"/>
        <end position="255"/>
    </location>
</feature>
<feature type="strand" evidence="40">
    <location>
        <begin position="273"/>
        <end position="276"/>
    </location>
</feature>
<feature type="strand" evidence="40">
    <location>
        <begin position="284"/>
        <end position="288"/>
    </location>
</feature>
<feature type="turn" evidence="40">
    <location>
        <begin position="292"/>
        <end position="294"/>
    </location>
</feature>
<feature type="strand" evidence="40">
    <location>
        <begin position="297"/>
        <end position="300"/>
    </location>
</feature>
<feature type="strand" evidence="42">
    <location>
        <begin position="302"/>
        <end position="304"/>
    </location>
</feature>
<feature type="strand" evidence="40">
    <location>
        <begin position="306"/>
        <end position="312"/>
    </location>
</feature>
<feature type="strand" evidence="40">
    <location>
        <begin position="314"/>
        <end position="316"/>
    </location>
</feature>
<feature type="strand" evidence="40">
    <location>
        <begin position="318"/>
        <end position="323"/>
    </location>
</feature>
<feature type="helix" evidence="40">
    <location>
        <begin position="324"/>
        <end position="326"/>
    </location>
</feature>
<feature type="strand" evidence="40">
    <location>
        <begin position="327"/>
        <end position="329"/>
    </location>
</feature>
<feature type="helix" evidence="40">
    <location>
        <begin position="333"/>
        <end position="335"/>
    </location>
</feature>
<feature type="helix" evidence="40">
    <location>
        <begin position="336"/>
        <end position="341"/>
    </location>
</feature>
<feature type="helix" evidence="41">
    <location>
        <begin position="350"/>
        <end position="357"/>
    </location>
</feature>
<feature type="helix" evidence="40">
    <location>
        <begin position="362"/>
        <end position="379"/>
    </location>
</feature>
<feature type="helix" evidence="40">
    <location>
        <begin position="383"/>
        <end position="390"/>
    </location>
</feature>
<feature type="strand" evidence="37">
    <location>
        <begin position="963"/>
        <end position="969"/>
    </location>
</feature>
<feature type="strand" evidence="37">
    <location>
        <begin position="972"/>
        <end position="978"/>
    </location>
</feature>
<feature type="turn" evidence="37">
    <location>
        <begin position="981"/>
        <end position="983"/>
    </location>
</feature>
<feature type="helix" evidence="37">
    <location>
        <begin position="986"/>
        <end position="989"/>
    </location>
</feature>
<feature type="strand" evidence="37">
    <location>
        <begin position="997"/>
        <end position="1002"/>
    </location>
</feature>
<feature type="turn" evidence="37">
    <location>
        <begin position="1003"/>
        <end position="1006"/>
    </location>
</feature>
<feature type="strand" evidence="37">
    <location>
        <begin position="1007"/>
        <end position="1012"/>
    </location>
</feature>
<feature type="helix" evidence="37">
    <location>
        <begin position="1013"/>
        <end position="1015"/>
    </location>
</feature>
<feature type="strand" evidence="37">
    <location>
        <begin position="1016"/>
        <end position="1018"/>
    </location>
</feature>
<feature type="strand" evidence="32">
    <location>
        <begin position="1025"/>
        <end position="1027"/>
    </location>
</feature>
<feature type="helix" evidence="32">
    <location>
        <begin position="1036"/>
        <end position="1052"/>
    </location>
</feature>
<feature type="turn" evidence="39">
    <location>
        <begin position="1060"/>
        <end position="1062"/>
    </location>
</feature>
<feature type="helix" evidence="39">
    <location>
        <begin position="1092"/>
        <end position="1094"/>
    </location>
</feature>
<feature type="strand" evidence="39">
    <location>
        <begin position="1104"/>
        <end position="1106"/>
    </location>
</feature>
<feature type="strand" evidence="38">
    <location>
        <begin position="1110"/>
        <end position="1112"/>
    </location>
</feature>
<feature type="helix" evidence="39">
    <location>
        <begin position="1115"/>
        <end position="1118"/>
    </location>
</feature>
<feature type="turn" evidence="39">
    <location>
        <begin position="1125"/>
        <end position="1127"/>
    </location>
</feature>
<feature type="helix" evidence="39">
    <location>
        <begin position="1131"/>
        <end position="1133"/>
    </location>
</feature>
<feature type="helix" evidence="39">
    <location>
        <begin position="1138"/>
        <end position="1141"/>
    </location>
</feature>
<feature type="strand" evidence="39">
    <location>
        <begin position="1147"/>
        <end position="1151"/>
    </location>
</feature>
<feature type="strand" evidence="39">
    <location>
        <begin position="1153"/>
        <end position="1155"/>
    </location>
</feature>
<feature type="strand" evidence="39">
    <location>
        <begin position="1157"/>
        <end position="1163"/>
    </location>
</feature>
<feature type="strand" evidence="39">
    <location>
        <begin position="1170"/>
        <end position="1174"/>
    </location>
</feature>
<feature type="strand" evidence="39">
    <location>
        <begin position="1177"/>
        <end position="1179"/>
    </location>
</feature>
<feature type="helix" evidence="39">
    <location>
        <begin position="1181"/>
        <end position="1193"/>
    </location>
</feature>
<feature type="strand" evidence="39">
    <location>
        <begin position="1201"/>
        <end position="1205"/>
    </location>
</feature>
<feature type="strand" evidence="39">
    <location>
        <begin position="1208"/>
        <end position="1211"/>
    </location>
</feature>
<feature type="turn" evidence="39">
    <location>
        <begin position="1212"/>
        <end position="1214"/>
    </location>
</feature>
<feature type="helix" evidence="39">
    <location>
        <begin position="1218"/>
        <end position="1221"/>
    </location>
</feature>
<feature type="strand" evidence="39">
    <location>
        <begin position="1229"/>
        <end position="1237"/>
    </location>
</feature>
<feature type="strand" evidence="39">
    <location>
        <begin position="1240"/>
        <end position="1249"/>
    </location>
</feature>
<feature type="strand" evidence="43">
    <location>
        <begin position="1253"/>
        <end position="1255"/>
    </location>
</feature>
<feature type="strand" evidence="43">
    <location>
        <begin position="1262"/>
        <end position="1264"/>
    </location>
</feature>
<feature type="strand" evidence="43">
    <location>
        <begin position="1277"/>
        <end position="1279"/>
    </location>
</feature>
<feature type="turn" evidence="34">
    <location>
        <begin position="1325"/>
        <end position="1327"/>
    </location>
</feature>
<feature type="strand" evidence="34">
    <location>
        <begin position="1331"/>
        <end position="1335"/>
    </location>
</feature>
<feature type="helix" evidence="34">
    <location>
        <begin position="1348"/>
        <end position="1350"/>
    </location>
</feature>
<feature type="strand" evidence="36">
    <location>
        <begin position="1357"/>
        <end position="1359"/>
    </location>
</feature>
<feature type="helix" evidence="34">
    <location>
        <begin position="1363"/>
        <end position="1365"/>
    </location>
</feature>
<feature type="turn" evidence="34">
    <location>
        <begin position="1368"/>
        <end position="1370"/>
    </location>
</feature>
<feature type="strand" evidence="36">
    <location>
        <begin position="1375"/>
        <end position="1377"/>
    </location>
</feature>
<feature type="strand" evidence="34">
    <location>
        <begin position="1379"/>
        <end position="1382"/>
    </location>
</feature>
<feature type="turn" evidence="34">
    <location>
        <begin position="1387"/>
        <end position="1389"/>
    </location>
</feature>
<feature type="turn" evidence="35">
    <location>
        <begin position="1391"/>
        <end position="1393"/>
    </location>
</feature>
<feature type="turn" evidence="34">
    <location>
        <begin position="1398"/>
        <end position="1401"/>
    </location>
</feature>
<proteinExistence type="evidence at protein level"/>
<organism>
    <name type="scientific">Homo sapiens</name>
    <name type="common">Human</name>
    <dbReference type="NCBI Taxonomy" id="9606"/>
    <lineage>
        <taxon>Eukaryota</taxon>
        <taxon>Metazoa</taxon>
        <taxon>Chordata</taxon>
        <taxon>Craniata</taxon>
        <taxon>Vertebrata</taxon>
        <taxon>Euteleostomi</taxon>
        <taxon>Mammalia</taxon>
        <taxon>Eutheria</taxon>
        <taxon>Euarchontoglires</taxon>
        <taxon>Primates</taxon>
        <taxon>Haplorrhini</taxon>
        <taxon>Catarrhini</taxon>
        <taxon>Hominidae</taxon>
        <taxon>Homo</taxon>
    </lineage>
</organism>